<organism>
    <name type="scientific">Vibrio atlanticus (strain LGP32)</name>
    <name type="common">Vibrio splendidus (strain Mel32)</name>
    <dbReference type="NCBI Taxonomy" id="575788"/>
    <lineage>
        <taxon>Bacteria</taxon>
        <taxon>Pseudomonadati</taxon>
        <taxon>Pseudomonadota</taxon>
        <taxon>Gammaproteobacteria</taxon>
        <taxon>Vibrionales</taxon>
        <taxon>Vibrionaceae</taxon>
        <taxon>Vibrio</taxon>
    </lineage>
</organism>
<protein>
    <recommendedName>
        <fullName evidence="1">Dihydroorotate dehydrogenase (quinone)</fullName>
        <ecNumber evidence="1">1.3.5.2</ecNumber>
    </recommendedName>
    <alternativeName>
        <fullName evidence="1">DHOdehase</fullName>
        <shortName evidence="1">DHOD</shortName>
        <shortName evidence="1">DHODase</shortName>
    </alternativeName>
    <alternativeName>
        <fullName evidence="1">Dihydroorotate oxidase</fullName>
    </alternativeName>
</protein>
<accession>B7VNK9</accession>
<proteinExistence type="inferred from homology"/>
<dbReference type="EC" id="1.3.5.2" evidence="1"/>
<dbReference type="EMBL" id="FM954972">
    <property type="protein sequence ID" value="CAV18585.1"/>
    <property type="molecule type" value="Genomic_DNA"/>
</dbReference>
<dbReference type="SMR" id="B7VNK9"/>
<dbReference type="STRING" id="575788.VS_1422"/>
<dbReference type="KEGG" id="vsp:VS_1422"/>
<dbReference type="PATRIC" id="fig|575788.5.peg.2728"/>
<dbReference type="eggNOG" id="COG0167">
    <property type="taxonomic scope" value="Bacteria"/>
</dbReference>
<dbReference type="HOGENOM" id="CLU_013640_2_0_6"/>
<dbReference type="UniPathway" id="UPA00070">
    <property type="reaction ID" value="UER00946"/>
</dbReference>
<dbReference type="Proteomes" id="UP000009100">
    <property type="component" value="Chromosome 1"/>
</dbReference>
<dbReference type="GO" id="GO:0005737">
    <property type="term" value="C:cytoplasm"/>
    <property type="evidence" value="ECO:0007669"/>
    <property type="project" value="InterPro"/>
</dbReference>
<dbReference type="GO" id="GO:0005886">
    <property type="term" value="C:plasma membrane"/>
    <property type="evidence" value="ECO:0007669"/>
    <property type="project" value="UniProtKB-SubCell"/>
</dbReference>
<dbReference type="GO" id="GO:0106430">
    <property type="term" value="F:dihydroorotate dehydrogenase (quinone) activity"/>
    <property type="evidence" value="ECO:0007669"/>
    <property type="project" value="UniProtKB-EC"/>
</dbReference>
<dbReference type="GO" id="GO:0006207">
    <property type="term" value="P:'de novo' pyrimidine nucleobase biosynthetic process"/>
    <property type="evidence" value="ECO:0007669"/>
    <property type="project" value="InterPro"/>
</dbReference>
<dbReference type="GO" id="GO:0044205">
    <property type="term" value="P:'de novo' UMP biosynthetic process"/>
    <property type="evidence" value="ECO:0007669"/>
    <property type="project" value="UniProtKB-UniRule"/>
</dbReference>
<dbReference type="CDD" id="cd04738">
    <property type="entry name" value="DHOD_2_like"/>
    <property type="match status" value="1"/>
</dbReference>
<dbReference type="FunFam" id="3.20.20.70:FF:000028">
    <property type="entry name" value="Dihydroorotate dehydrogenase (quinone)"/>
    <property type="match status" value="1"/>
</dbReference>
<dbReference type="Gene3D" id="3.20.20.70">
    <property type="entry name" value="Aldolase class I"/>
    <property type="match status" value="1"/>
</dbReference>
<dbReference type="HAMAP" id="MF_00225">
    <property type="entry name" value="DHO_dh_type2"/>
    <property type="match status" value="1"/>
</dbReference>
<dbReference type="InterPro" id="IPR013785">
    <property type="entry name" value="Aldolase_TIM"/>
</dbReference>
<dbReference type="InterPro" id="IPR050074">
    <property type="entry name" value="DHO_dehydrogenase"/>
</dbReference>
<dbReference type="InterPro" id="IPR012135">
    <property type="entry name" value="Dihydroorotate_DH_1_2"/>
</dbReference>
<dbReference type="InterPro" id="IPR005719">
    <property type="entry name" value="Dihydroorotate_DH_2"/>
</dbReference>
<dbReference type="InterPro" id="IPR005720">
    <property type="entry name" value="Dihydroorotate_DH_cat"/>
</dbReference>
<dbReference type="InterPro" id="IPR001295">
    <property type="entry name" value="Dihydroorotate_DH_CS"/>
</dbReference>
<dbReference type="NCBIfam" id="NF003644">
    <property type="entry name" value="PRK05286.1-1"/>
    <property type="match status" value="1"/>
</dbReference>
<dbReference type="NCBIfam" id="NF003645">
    <property type="entry name" value="PRK05286.1-2"/>
    <property type="match status" value="1"/>
</dbReference>
<dbReference type="NCBIfam" id="NF003646">
    <property type="entry name" value="PRK05286.1-4"/>
    <property type="match status" value="1"/>
</dbReference>
<dbReference type="NCBIfam" id="NF003652">
    <property type="entry name" value="PRK05286.2-5"/>
    <property type="match status" value="1"/>
</dbReference>
<dbReference type="NCBIfam" id="TIGR01036">
    <property type="entry name" value="pyrD_sub2"/>
    <property type="match status" value="1"/>
</dbReference>
<dbReference type="PANTHER" id="PTHR48109:SF4">
    <property type="entry name" value="DIHYDROOROTATE DEHYDROGENASE (QUINONE), MITOCHONDRIAL"/>
    <property type="match status" value="1"/>
</dbReference>
<dbReference type="PANTHER" id="PTHR48109">
    <property type="entry name" value="DIHYDROOROTATE DEHYDROGENASE (QUINONE), MITOCHONDRIAL-RELATED"/>
    <property type="match status" value="1"/>
</dbReference>
<dbReference type="Pfam" id="PF01180">
    <property type="entry name" value="DHO_dh"/>
    <property type="match status" value="1"/>
</dbReference>
<dbReference type="PIRSF" id="PIRSF000164">
    <property type="entry name" value="DHO_oxidase"/>
    <property type="match status" value="1"/>
</dbReference>
<dbReference type="SUPFAM" id="SSF51395">
    <property type="entry name" value="FMN-linked oxidoreductases"/>
    <property type="match status" value="1"/>
</dbReference>
<dbReference type="PROSITE" id="PS00911">
    <property type="entry name" value="DHODEHASE_1"/>
    <property type="match status" value="1"/>
</dbReference>
<dbReference type="PROSITE" id="PS00912">
    <property type="entry name" value="DHODEHASE_2"/>
    <property type="match status" value="1"/>
</dbReference>
<sequence>MLYRLARTGFFQLDAEKAHDLAIQNFKRFTGTPIDLLYRQQLPNRPVECMGLTFKNPVGLAAGLDKNGECIDAFGAMGFGFVEVGTVTPRPQAGNDKPRLFRLVEAEGIINRMGFNNLGVDNLIENVKKSNYDGILGINIGKNKDTPIEKGAEDYLICMEKVYQYAGYIAVNISSPNTPGLRSLQYGEALDDLLSELKTKQSELEEKHGKYVPLALKIAPDLSDDEISQICESLIKNKIDGVIATNTTLDRSIVEGMKHCDEAGGLSGRPVQSRSTEVVRKLHEELGDALPIIGVGGVDSYVAAKEKMMAGAKLVQVYSGFIYKGPGLVGDIVKNL</sequence>
<gene>
    <name evidence="1" type="primary">pyrD</name>
    <name type="ordered locus">VS_1422</name>
</gene>
<keyword id="KW-1003">Cell membrane</keyword>
<keyword id="KW-0285">Flavoprotein</keyword>
<keyword id="KW-0288">FMN</keyword>
<keyword id="KW-0472">Membrane</keyword>
<keyword id="KW-0560">Oxidoreductase</keyword>
<keyword id="KW-0665">Pyrimidine biosynthesis</keyword>
<evidence type="ECO:0000255" key="1">
    <source>
        <dbReference type="HAMAP-Rule" id="MF_00225"/>
    </source>
</evidence>
<feature type="chain" id="PRO_1000195093" description="Dihydroorotate dehydrogenase (quinone)">
    <location>
        <begin position="1"/>
        <end position="336"/>
    </location>
</feature>
<feature type="active site" description="Nucleophile" evidence="1">
    <location>
        <position position="175"/>
    </location>
</feature>
<feature type="binding site" evidence="1">
    <location>
        <begin position="62"/>
        <end position="66"/>
    </location>
    <ligand>
        <name>FMN</name>
        <dbReference type="ChEBI" id="CHEBI:58210"/>
    </ligand>
</feature>
<feature type="binding site" evidence="1">
    <location>
        <position position="66"/>
    </location>
    <ligand>
        <name>substrate</name>
    </ligand>
</feature>
<feature type="binding site" evidence="1">
    <location>
        <position position="86"/>
    </location>
    <ligand>
        <name>FMN</name>
        <dbReference type="ChEBI" id="CHEBI:58210"/>
    </ligand>
</feature>
<feature type="binding site" evidence="1">
    <location>
        <begin position="111"/>
        <end position="115"/>
    </location>
    <ligand>
        <name>substrate</name>
    </ligand>
</feature>
<feature type="binding site" evidence="1">
    <location>
        <position position="139"/>
    </location>
    <ligand>
        <name>FMN</name>
        <dbReference type="ChEBI" id="CHEBI:58210"/>
    </ligand>
</feature>
<feature type="binding site" evidence="1">
    <location>
        <position position="172"/>
    </location>
    <ligand>
        <name>FMN</name>
        <dbReference type="ChEBI" id="CHEBI:58210"/>
    </ligand>
</feature>
<feature type="binding site" evidence="1">
    <location>
        <position position="172"/>
    </location>
    <ligand>
        <name>substrate</name>
    </ligand>
</feature>
<feature type="binding site" evidence="1">
    <location>
        <position position="177"/>
    </location>
    <ligand>
        <name>substrate</name>
    </ligand>
</feature>
<feature type="binding site" evidence="1">
    <location>
        <position position="217"/>
    </location>
    <ligand>
        <name>FMN</name>
        <dbReference type="ChEBI" id="CHEBI:58210"/>
    </ligand>
</feature>
<feature type="binding site" evidence="1">
    <location>
        <position position="245"/>
    </location>
    <ligand>
        <name>FMN</name>
        <dbReference type="ChEBI" id="CHEBI:58210"/>
    </ligand>
</feature>
<feature type="binding site" evidence="1">
    <location>
        <begin position="246"/>
        <end position="247"/>
    </location>
    <ligand>
        <name>substrate</name>
    </ligand>
</feature>
<feature type="binding site" evidence="1">
    <location>
        <position position="268"/>
    </location>
    <ligand>
        <name>FMN</name>
        <dbReference type="ChEBI" id="CHEBI:58210"/>
    </ligand>
</feature>
<feature type="binding site" evidence="1">
    <location>
        <position position="297"/>
    </location>
    <ligand>
        <name>FMN</name>
        <dbReference type="ChEBI" id="CHEBI:58210"/>
    </ligand>
</feature>
<feature type="binding site" evidence="1">
    <location>
        <begin position="318"/>
        <end position="319"/>
    </location>
    <ligand>
        <name>FMN</name>
        <dbReference type="ChEBI" id="CHEBI:58210"/>
    </ligand>
</feature>
<name>PYRD_VIBA3</name>
<comment type="function">
    <text evidence="1">Catalyzes the conversion of dihydroorotate to orotate with quinone as electron acceptor.</text>
</comment>
<comment type="catalytic activity">
    <reaction evidence="1">
        <text>(S)-dihydroorotate + a quinone = orotate + a quinol</text>
        <dbReference type="Rhea" id="RHEA:30187"/>
        <dbReference type="ChEBI" id="CHEBI:24646"/>
        <dbReference type="ChEBI" id="CHEBI:30839"/>
        <dbReference type="ChEBI" id="CHEBI:30864"/>
        <dbReference type="ChEBI" id="CHEBI:132124"/>
        <dbReference type="EC" id="1.3.5.2"/>
    </reaction>
</comment>
<comment type="cofactor">
    <cofactor evidence="1">
        <name>FMN</name>
        <dbReference type="ChEBI" id="CHEBI:58210"/>
    </cofactor>
    <text evidence="1">Binds 1 FMN per subunit.</text>
</comment>
<comment type="pathway">
    <text evidence="1">Pyrimidine metabolism; UMP biosynthesis via de novo pathway; orotate from (S)-dihydroorotate (quinone route): step 1/1.</text>
</comment>
<comment type="subunit">
    <text evidence="1">Monomer.</text>
</comment>
<comment type="subcellular location">
    <subcellularLocation>
        <location evidence="1">Cell membrane</location>
        <topology evidence="1">Peripheral membrane protein</topology>
    </subcellularLocation>
</comment>
<comment type="similarity">
    <text evidence="1">Belongs to the dihydroorotate dehydrogenase family. Type 2 subfamily.</text>
</comment>
<reference key="1">
    <citation type="submission" date="2009-02" db="EMBL/GenBank/DDBJ databases">
        <title>Vibrio splendidus str. LGP32 complete genome.</title>
        <authorList>
            <person name="Mazel D."/>
            <person name="Le Roux F."/>
        </authorList>
    </citation>
    <scope>NUCLEOTIDE SEQUENCE [LARGE SCALE GENOMIC DNA]</scope>
    <source>
        <strain>LGP32</strain>
    </source>
</reference>